<reference key="1">
    <citation type="journal article" date="1985" name="J. Biol. Chem.">
        <title>Mouse ornithine decarboxylase. Complete amino acid sequence deduced from cDNA.</title>
        <authorList>
            <person name="Gupta M."/>
            <person name="Coffino P."/>
        </authorList>
    </citation>
    <scope>NUCLEOTIDE SEQUENCE [MRNA]</scope>
</reference>
<reference key="2">
    <citation type="journal article" date="1985" name="Proc. Natl. Acad. Sci. U.S.A.">
        <title>Nucleotide sequence of murine ornithine decarboxylase mRNA.</title>
        <authorList>
            <person name="Kahana C."/>
            <person name="Nathans D."/>
        </authorList>
    </citation>
    <scope>NUCLEOTIDE SEQUENCE [MRNA]</scope>
</reference>
<reference key="3">
    <citation type="journal article" date="1988" name="Nucleic Acids Res.">
        <title>Nucleotide sequence of the mouse ornithine decarboxylase gene.</title>
        <authorList>
            <person name="Coffino P."/>
            <person name="Chen E.L."/>
        </authorList>
    </citation>
    <scope>NUCLEOTIDE SEQUENCE [GENOMIC DNA]</scope>
    <source>
        <strain>BALB/cJ</strain>
    </source>
</reference>
<reference key="4">
    <citation type="journal article" date="1988" name="J. Biol. Chem.">
        <title>Isolation and characterization of the mouse ornithine decarboxylase gene.</title>
        <authorList>
            <person name="Katz A."/>
            <person name="Kahana C."/>
        </authorList>
    </citation>
    <scope>NUCLEOTIDE SEQUENCE [GENOMIC DNA]</scope>
</reference>
<reference key="5">
    <citation type="journal article" date="1993" name="J. Mol. Evol.">
        <title>Domains within the mammalian ornithine decarboxylase messenger RNA have evolved independently and episodically.</title>
        <authorList>
            <person name="Johannes G.J."/>
            <person name="Berger F.G."/>
        </authorList>
    </citation>
    <scope>NUCLEOTIDE SEQUENCE [MRNA]</scope>
</reference>
<reference key="6">
    <citation type="submission" date="2008-04" db="EMBL/GenBank/DDBJ databases">
        <authorList>
            <person name="Yu Y."/>
            <person name="Luo X."/>
        </authorList>
    </citation>
    <scope>NUCLEOTIDE SEQUENCE [MRNA]</scope>
    <source>
        <strain>Kunming</strain>
    </source>
</reference>
<reference key="7">
    <citation type="journal article" date="2005" name="Science">
        <title>The transcriptional landscape of the mammalian genome.</title>
        <authorList>
            <person name="Carninci P."/>
            <person name="Kasukawa T."/>
            <person name="Katayama S."/>
            <person name="Gough J."/>
            <person name="Frith M.C."/>
            <person name="Maeda N."/>
            <person name="Oyama R."/>
            <person name="Ravasi T."/>
            <person name="Lenhard B."/>
            <person name="Wells C."/>
            <person name="Kodzius R."/>
            <person name="Shimokawa K."/>
            <person name="Bajic V.B."/>
            <person name="Brenner S.E."/>
            <person name="Batalov S."/>
            <person name="Forrest A.R."/>
            <person name="Zavolan M."/>
            <person name="Davis M.J."/>
            <person name="Wilming L.G."/>
            <person name="Aidinis V."/>
            <person name="Allen J.E."/>
            <person name="Ambesi-Impiombato A."/>
            <person name="Apweiler R."/>
            <person name="Aturaliya R.N."/>
            <person name="Bailey T.L."/>
            <person name="Bansal M."/>
            <person name="Baxter L."/>
            <person name="Beisel K.W."/>
            <person name="Bersano T."/>
            <person name="Bono H."/>
            <person name="Chalk A.M."/>
            <person name="Chiu K.P."/>
            <person name="Choudhary V."/>
            <person name="Christoffels A."/>
            <person name="Clutterbuck D.R."/>
            <person name="Crowe M.L."/>
            <person name="Dalla E."/>
            <person name="Dalrymple B.P."/>
            <person name="de Bono B."/>
            <person name="Della Gatta G."/>
            <person name="di Bernardo D."/>
            <person name="Down T."/>
            <person name="Engstrom P."/>
            <person name="Fagiolini M."/>
            <person name="Faulkner G."/>
            <person name="Fletcher C.F."/>
            <person name="Fukushima T."/>
            <person name="Furuno M."/>
            <person name="Futaki S."/>
            <person name="Gariboldi M."/>
            <person name="Georgii-Hemming P."/>
            <person name="Gingeras T.R."/>
            <person name="Gojobori T."/>
            <person name="Green R.E."/>
            <person name="Gustincich S."/>
            <person name="Harbers M."/>
            <person name="Hayashi Y."/>
            <person name="Hensch T.K."/>
            <person name="Hirokawa N."/>
            <person name="Hill D."/>
            <person name="Huminiecki L."/>
            <person name="Iacono M."/>
            <person name="Ikeo K."/>
            <person name="Iwama A."/>
            <person name="Ishikawa T."/>
            <person name="Jakt M."/>
            <person name="Kanapin A."/>
            <person name="Katoh M."/>
            <person name="Kawasawa Y."/>
            <person name="Kelso J."/>
            <person name="Kitamura H."/>
            <person name="Kitano H."/>
            <person name="Kollias G."/>
            <person name="Krishnan S.P."/>
            <person name="Kruger A."/>
            <person name="Kummerfeld S.K."/>
            <person name="Kurochkin I.V."/>
            <person name="Lareau L.F."/>
            <person name="Lazarevic D."/>
            <person name="Lipovich L."/>
            <person name="Liu J."/>
            <person name="Liuni S."/>
            <person name="McWilliam S."/>
            <person name="Madan Babu M."/>
            <person name="Madera M."/>
            <person name="Marchionni L."/>
            <person name="Matsuda H."/>
            <person name="Matsuzawa S."/>
            <person name="Miki H."/>
            <person name="Mignone F."/>
            <person name="Miyake S."/>
            <person name="Morris K."/>
            <person name="Mottagui-Tabar S."/>
            <person name="Mulder N."/>
            <person name="Nakano N."/>
            <person name="Nakauchi H."/>
            <person name="Ng P."/>
            <person name="Nilsson R."/>
            <person name="Nishiguchi S."/>
            <person name="Nishikawa S."/>
            <person name="Nori F."/>
            <person name="Ohara O."/>
            <person name="Okazaki Y."/>
            <person name="Orlando V."/>
            <person name="Pang K.C."/>
            <person name="Pavan W.J."/>
            <person name="Pavesi G."/>
            <person name="Pesole G."/>
            <person name="Petrovsky N."/>
            <person name="Piazza S."/>
            <person name="Reed J."/>
            <person name="Reid J.F."/>
            <person name="Ring B.Z."/>
            <person name="Ringwald M."/>
            <person name="Rost B."/>
            <person name="Ruan Y."/>
            <person name="Salzberg S.L."/>
            <person name="Sandelin A."/>
            <person name="Schneider C."/>
            <person name="Schoenbach C."/>
            <person name="Sekiguchi K."/>
            <person name="Semple C.A."/>
            <person name="Seno S."/>
            <person name="Sessa L."/>
            <person name="Sheng Y."/>
            <person name="Shibata Y."/>
            <person name="Shimada H."/>
            <person name="Shimada K."/>
            <person name="Silva D."/>
            <person name="Sinclair B."/>
            <person name="Sperling S."/>
            <person name="Stupka E."/>
            <person name="Sugiura K."/>
            <person name="Sultana R."/>
            <person name="Takenaka Y."/>
            <person name="Taki K."/>
            <person name="Tammoja K."/>
            <person name="Tan S.L."/>
            <person name="Tang S."/>
            <person name="Taylor M.S."/>
            <person name="Tegner J."/>
            <person name="Teichmann S.A."/>
            <person name="Ueda H.R."/>
            <person name="van Nimwegen E."/>
            <person name="Verardo R."/>
            <person name="Wei C.L."/>
            <person name="Yagi K."/>
            <person name="Yamanishi H."/>
            <person name="Zabarovsky E."/>
            <person name="Zhu S."/>
            <person name="Zimmer A."/>
            <person name="Hide W."/>
            <person name="Bult C."/>
            <person name="Grimmond S.M."/>
            <person name="Teasdale R.D."/>
            <person name="Liu E.T."/>
            <person name="Brusic V."/>
            <person name="Quackenbush J."/>
            <person name="Wahlestedt C."/>
            <person name="Mattick J.S."/>
            <person name="Hume D.A."/>
            <person name="Kai C."/>
            <person name="Sasaki D."/>
            <person name="Tomaru Y."/>
            <person name="Fukuda S."/>
            <person name="Kanamori-Katayama M."/>
            <person name="Suzuki M."/>
            <person name="Aoki J."/>
            <person name="Arakawa T."/>
            <person name="Iida J."/>
            <person name="Imamura K."/>
            <person name="Itoh M."/>
            <person name="Kato T."/>
            <person name="Kawaji H."/>
            <person name="Kawagashira N."/>
            <person name="Kawashima T."/>
            <person name="Kojima M."/>
            <person name="Kondo S."/>
            <person name="Konno H."/>
            <person name="Nakano K."/>
            <person name="Ninomiya N."/>
            <person name="Nishio T."/>
            <person name="Okada M."/>
            <person name="Plessy C."/>
            <person name="Shibata K."/>
            <person name="Shiraki T."/>
            <person name="Suzuki S."/>
            <person name="Tagami M."/>
            <person name="Waki K."/>
            <person name="Watahiki A."/>
            <person name="Okamura-Oho Y."/>
            <person name="Suzuki H."/>
            <person name="Kawai J."/>
            <person name="Hayashizaki Y."/>
        </authorList>
    </citation>
    <scope>NUCLEOTIDE SEQUENCE [LARGE SCALE MRNA]</scope>
    <source>
        <strain>C57BL/6J</strain>
        <tissue>Egg</tissue>
    </source>
</reference>
<reference key="8">
    <citation type="submission" date="2005-07" db="EMBL/GenBank/DDBJ databases">
        <authorList>
            <person name="Mural R.J."/>
            <person name="Adams M.D."/>
            <person name="Myers E.W."/>
            <person name="Smith H.O."/>
            <person name="Venter J.C."/>
        </authorList>
    </citation>
    <scope>NUCLEOTIDE SEQUENCE [LARGE SCALE GENOMIC DNA]</scope>
</reference>
<reference key="9">
    <citation type="journal article" date="2004" name="Genome Res.">
        <title>The status, quality, and expansion of the NIH full-length cDNA project: the Mammalian Gene Collection (MGC).</title>
        <authorList>
            <consortium name="The MGC Project Team"/>
        </authorList>
    </citation>
    <scope>NUCLEOTIDE SEQUENCE [LARGE SCALE MRNA]</scope>
    <source>
        <strain>C57BL/6J</strain>
        <tissue>Brain</tissue>
        <tissue>Embryo</tissue>
    </source>
</reference>
<reference key="10">
    <citation type="journal article" date="1986" name="Proc. Natl. Acad. Sci. U.S.A.">
        <title>Two ornithine decarboxylase mRNA species in mouse kidney arise from size heterogeneity at their 3' termini.</title>
        <authorList>
            <person name="Hickok N.J."/>
            <person name="Seppaenen P.J."/>
            <person name="Kontula K.K."/>
            <person name="Jaenne P.A."/>
            <person name="Bardin C.W."/>
            <person name="Jaenne O.A."/>
        </authorList>
    </citation>
    <scope>NUCLEOTIDE SEQUENCE [MRNA] OF 178-461</scope>
</reference>
<reference key="11">
    <citation type="journal article" date="1991" name="Eur. J. Biochem.">
        <title>Mouse ornithine decarboxylase is phosphorylated by casein kinase-II at a predominant single location (serine 303).</title>
        <authorList>
            <person name="Rosenberg-Hasson Y."/>
            <person name="Strumpf D."/>
            <person name="Kahana C."/>
        </authorList>
    </citation>
    <scope>PHOSPHORYLATION AT SER-303 BY CKII</scope>
</reference>
<reference key="12">
    <citation type="journal article" date="1992" name="J. Biol. Chem.">
        <title>Mechanism of the irreversible inactivation of mouse ornithine decarboxylase by alpha-difluoromethylornithine. Characterization of sequences at the inhibitor and coenzyme binding sites.</title>
        <authorList>
            <person name="Poulin R."/>
            <person name="Lu L."/>
            <person name="Ackermann B."/>
            <person name="Bey P."/>
            <person name="Pegg A.E."/>
        </authorList>
    </citation>
    <scope>ACTIVE SITE</scope>
    <scope>PYRIDOXAL PHOSPHATE AT LYS-69</scope>
</reference>
<reference key="13">
    <citation type="journal article" date="1993" name="Biochemistry">
        <title>Intersubunit location of the active site of mammalian ornithine decarboxylase as determined by hybridization of site-directed mutants.</title>
        <authorList>
            <person name="Tobias K.E."/>
            <person name="Kahana C."/>
        </authorList>
    </citation>
    <scope>ACTIVE SITE</scope>
</reference>
<reference key="14">
    <citation type="journal article" date="1993" name="Eur. J. Biochem.">
        <title>Gly387 of murine ornithine decarboxylase is essential for the formation of stable homodimers.</title>
        <authorList>
            <person name="Tobias K.E."/>
            <person name="Mamroud-Kidron E."/>
            <person name="Kahana C."/>
        </authorList>
    </citation>
    <scope>MUTAGENESIS OF GLY-387</scope>
</reference>
<reference key="15">
    <citation type="journal article" date="1994" name="J. Biol. Chem.">
        <title>Rapid exchange of subunits of mammalian ornithine decarboxylase.</title>
        <authorList>
            <person name="Coleman C.S."/>
            <person name="Stanley B.A."/>
            <person name="Viswanath R."/>
            <person name="Pegg A.E."/>
        </authorList>
    </citation>
    <scope>SUBUNIT</scope>
</reference>
<reference key="16">
    <citation type="journal article" date="2009" name="Int. J. Biochem. Cell Biol.">
        <title>Expression of antizyme inhibitor 2 in male haploid germinal cells suggests a role in spermiogenesis.</title>
        <authorList>
            <person name="Lopez-Contreras A.J."/>
            <person name="Ramos-Molina B."/>
            <person name="Martinez-de-la-Torre M."/>
            <person name="Penafiel-Verdu C."/>
            <person name="Puelles L."/>
            <person name="Cremades A."/>
            <person name="Penafiel R."/>
        </authorList>
    </citation>
    <scope>FUNCTION</scope>
    <scope>TISSUE SPECIFICITY</scope>
</reference>
<reference key="17">
    <citation type="journal article" date="2014" name="FEBS Open Bio">
        <title>Structural and degradative aspects of ornithine decarboxylase antizyme inhibitor 2.</title>
        <authorList>
            <person name="Ramos-Molina B."/>
            <person name="Lambertos A."/>
            <person name="Lopez-Contreras A.J."/>
            <person name="Kasprzak J.M."/>
            <person name="Czerwoniec A."/>
            <person name="Bujnicki J.M."/>
            <person name="Cremades A."/>
            <person name="Penafiel R."/>
        </authorList>
    </citation>
    <scope>FUNCTION</scope>
    <scope>SUBUNIT</scope>
</reference>
<reference evidence="13" key="18">
    <citation type="journal article" date="1999" name="Structure">
        <title>Structure of mammalian ornithine decarboxylase at 1.6 A resolution: stereochemical implications of PLP-dependent amino acid decarboxylases.</title>
        <authorList>
            <person name="Kern A.D."/>
            <person name="Oliveira M.A."/>
            <person name="Coffino P."/>
            <person name="Hackert M.L."/>
        </authorList>
    </citation>
    <scope>X-RAY CRYSTALLOGRAPHY (1.60 ANGSTROMS) OF 1-424 IN COMPLEX WITH COFACTOR</scope>
    <scope>PYRIDOXAL PHOSPHATE AT LYS-69</scope>
</reference>
<feature type="chain" id="PRO_0000149892" description="Ornithine decarboxylase">
    <location>
        <begin position="1"/>
        <end position="461"/>
    </location>
</feature>
<feature type="active site" description="Proton donor; shared with dimeric partner" evidence="3 4 10">
    <location>
        <position position="360"/>
    </location>
</feature>
<feature type="binding site" evidence="2">
    <location>
        <position position="200"/>
    </location>
    <ligand>
        <name>pyridoxal 5'-phosphate</name>
        <dbReference type="ChEBI" id="CHEBI:597326"/>
    </ligand>
</feature>
<feature type="binding site" evidence="3">
    <location>
        <position position="237"/>
    </location>
    <ligand>
        <name>pyridoxal 5'-phosphate</name>
        <dbReference type="ChEBI" id="CHEBI:597326"/>
    </ligand>
</feature>
<feature type="binding site" evidence="3">
    <location>
        <begin position="274"/>
        <end position="277"/>
    </location>
    <ligand>
        <name>pyridoxal 5'-phosphate</name>
        <dbReference type="ChEBI" id="CHEBI:597326"/>
    </ligand>
</feature>
<feature type="binding site" description="in other chain" evidence="1">
    <location>
        <begin position="331"/>
        <end position="332"/>
    </location>
    <ligand>
        <name>substrate</name>
        <note>ligand shared between dimeric partners</note>
    </ligand>
</feature>
<feature type="binding site" evidence="1">
    <location>
        <position position="361"/>
    </location>
    <ligand>
        <name>substrate</name>
        <note>ligand shared between dimeric partners</note>
    </ligand>
</feature>
<feature type="binding site" evidence="3">
    <location>
        <position position="389"/>
    </location>
    <ligand>
        <name>pyridoxal 5'-phosphate</name>
        <dbReference type="ChEBI" id="CHEBI:597326"/>
    </ligand>
</feature>
<feature type="site" description="Stacks against the aromatic ring of pyridoxal phosphate and stabilizes reaction intermediates" evidence="12">
    <location>
        <position position="197"/>
    </location>
</feature>
<feature type="modified residue" description="N6-(pyridoxal phosphate)lysine" evidence="3 4 13">
    <location>
        <position position="69"/>
    </location>
</feature>
<feature type="modified residue" description="Phosphoserine; by CK2" evidence="6">
    <location>
        <position position="303"/>
    </location>
</feature>
<feature type="modified residue" description="S-nitrosocysteine" evidence="2">
    <location>
        <position position="360"/>
    </location>
</feature>
<feature type="mutagenesis site" description="Partial loss of activity." evidence="9">
    <original>G</original>
    <variation>A</variation>
    <location>
        <position position="387"/>
    </location>
</feature>
<feature type="mutagenesis site" description="Loss of activity." evidence="9">
    <original>G</original>
    <variation>C</variation>
    <variation>D</variation>
    <variation>E</variation>
    <variation>F</variation>
    <variation>H</variation>
    <variation>I</variation>
    <variation>K</variation>
    <variation>L</variation>
    <variation>M</variation>
    <variation>N</variation>
    <variation>P</variation>
    <variation>Q</variation>
    <variation>R</variation>
    <variation>S</variation>
    <variation>T</variation>
    <variation>V</variation>
    <variation>W</variation>
    <variation>Y</variation>
    <location>
        <position position="387"/>
    </location>
</feature>
<feature type="sequence conflict" description="In Ref. 10; AAA39846." evidence="11" ref="10">
    <original>R</original>
    <variation>W</variation>
    <location>
        <position position="178"/>
    </location>
</feature>
<feature type="sequence conflict" description="In Ref. 1; AAA51638, 2; AAA39845, 3; CAA30301, 4; AAA39849 and 5; AAB27809." evidence="11" ref="1 2 3 4 5">
    <original>E</original>
    <variation>D</variation>
    <location>
        <position position="206"/>
    </location>
</feature>
<feature type="sequence conflict" description="In Ref. 10; AAA39848." evidence="11" ref="10">
    <original>Y</original>
    <variation>H</variation>
    <location>
        <position position="350"/>
    </location>
</feature>
<feature type="strand" evidence="14">
    <location>
        <begin position="3"/>
        <end position="6"/>
    </location>
</feature>
<feature type="strand" evidence="14">
    <location>
        <begin position="9"/>
        <end position="14"/>
    </location>
</feature>
<feature type="helix" evidence="14">
    <location>
        <begin position="20"/>
        <end position="28"/>
    </location>
</feature>
<feature type="strand" evidence="14">
    <location>
        <begin position="40"/>
        <end position="44"/>
    </location>
</feature>
<feature type="helix" evidence="14">
    <location>
        <begin position="45"/>
        <end position="58"/>
    </location>
</feature>
<feature type="strand" evidence="14">
    <location>
        <begin position="62"/>
        <end position="67"/>
    </location>
</feature>
<feature type="helix" evidence="14">
    <location>
        <begin position="68"/>
        <end position="70"/>
    </location>
</feature>
<feature type="helix" evidence="14">
    <location>
        <begin position="74"/>
        <end position="83"/>
    </location>
</feature>
<feature type="strand" evidence="14">
    <location>
        <begin position="86"/>
        <end position="89"/>
    </location>
</feature>
<feature type="helix" evidence="14">
    <location>
        <begin position="92"/>
        <end position="100"/>
    </location>
</feature>
<feature type="helix" evidence="14">
    <location>
        <begin position="105"/>
        <end position="107"/>
    </location>
</feature>
<feature type="strand" evidence="14">
    <location>
        <begin position="108"/>
        <end position="110"/>
    </location>
</feature>
<feature type="helix" evidence="14">
    <location>
        <begin position="117"/>
        <end position="125"/>
    </location>
</feature>
<feature type="strand" evidence="14">
    <location>
        <begin position="130"/>
        <end position="133"/>
    </location>
</feature>
<feature type="helix" evidence="14">
    <location>
        <begin position="136"/>
        <end position="145"/>
    </location>
</feature>
<feature type="strand" evidence="14">
    <location>
        <begin position="150"/>
        <end position="155"/>
    </location>
</feature>
<feature type="helix" evidence="14">
    <location>
        <begin position="174"/>
        <end position="186"/>
    </location>
</feature>
<feature type="strand" evidence="14">
    <location>
        <begin position="190"/>
        <end position="195"/>
    </location>
</feature>
<feature type="helix" evidence="14">
    <location>
        <begin position="206"/>
        <end position="225"/>
    </location>
</feature>
<feature type="strand" evidence="14">
    <location>
        <begin position="231"/>
        <end position="233"/>
    </location>
</feature>
<feature type="strand" evidence="14">
    <location>
        <begin position="241"/>
        <end position="246"/>
    </location>
</feature>
<feature type="helix" evidence="14">
    <location>
        <begin position="248"/>
        <end position="262"/>
    </location>
</feature>
<feature type="helix" evidence="14">
    <location>
        <begin position="265"/>
        <end position="267"/>
    </location>
</feature>
<feature type="strand" evidence="14">
    <location>
        <begin position="270"/>
        <end position="273"/>
    </location>
</feature>
<feature type="helix" evidence="14">
    <location>
        <begin position="277"/>
        <end position="280"/>
    </location>
</feature>
<feature type="helix" evidence="14">
    <location>
        <begin position="281"/>
        <end position="283"/>
    </location>
</feature>
<feature type="strand" evidence="14">
    <location>
        <begin position="284"/>
        <end position="296"/>
    </location>
</feature>
<feature type="strand" evidence="14">
    <location>
        <begin position="313"/>
        <end position="319"/>
    </location>
</feature>
<feature type="turn" evidence="14">
    <location>
        <begin position="322"/>
        <end position="326"/>
    </location>
</feature>
<feature type="helix" evidence="14">
    <location>
        <begin position="327"/>
        <end position="331"/>
    </location>
</feature>
<feature type="strand" evidence="14">
    <location>
        <begin position="339"/>
        <end position="342"/>
    </location>
</feature>
<feature type="strand" evidence="14">
    <location>
        <begin position="350"/>
        <end position="356"/>
    </location>
</feature>
<feature type="strand" evidence="14">
    <location>
        <begin position="358"/>
        <end position="360"/>
    </location>
</feature>
<feature type="strand" evidence="14">
    <location>
        <begin position="365"/>
        <end position="373"/>
    </location>
</feature>
<feature type="strand" evidence="14">
    <location>
        <begin position="380"/>
        <end position="383"/>
    </location>
</feature>
<feature type="strand" evidence="14">
    <location>
        <begin position="388"/>
        <end position="390"/>
    </location>
</feature>
<feature type="helix" evidence="14">
    <location>
        <begin position="391"/>
        <end position="393"/>
    </location>
</feature>
<feature type="helix" evidence="14">
    <location>
        <begin position="397"/>
        <end position="399"/>
    </location>
</feature>
<feature type="strand" evidence="14">
    <location>
        <begin position="404"/>
        <end position="410"/>
    </location>
</feature>
<feature type="helix" evidence="14">
    <location>
        <begin position="411"/>
        <end position="417"/>
    </location>
</feature>
<proteinExistence type="evidence at protein level"/>
<sequence>MSSFTKDEFDCHILDEGFTAKDILDQKINEVSSSDDKDAFYVADLGDILKKHLRWLKALPRVTPFYAVKCNDSRAIVSTLAAIGTGFDCASKTEIQLVQGLGVPAERVIYANPCKQVSQIKYAASNGVQMMTFDSEIELMKVARAHPKAKLVLRIATDDSKAVCRLSVKFGATLKTSRLLLERAKELNIDVIGVSFHVGSGCTDPETFVQAVSDARCVFDMATEVGFSMHLLDIGGGFPGSEDTKLKFEEITSVINPALDKYFPSDSGVRIIAEPGRYYVASAFTLAVNIIAKKTVWKEQPGSDDEDESNEQTFMYYVNDGVYGSFNCILYDHAHVKALLQKRPKPDEKYYSSSIWGPTCDGLDRIVERCNLPEMHVGDWMLFENMGAYTVAAASTFNGFQRPNIYYVMSRPMWQLMKQIQSHGFPPEVEEQDDGTLPMSCAQESGMDRHPAACASARINV</sequence>
<organism>
    <name type="scientific">Mus musculus</name>
    <name type="common">Mouse</name>
    <dbReference type="NCBI Taxonomy" id="10090"/>
    <lineage>
        <taxon>Eukaryota</taxon>
        <taxon>Metazoa</taxon>
        <taxon>Chordata</taxon>
        <taxon>Craniata</taxon>
        <taxon>Vertebrata</taxon>
        <taxon>Euteleostomi</taxon>
        <taxon>Mammalia</taxon>
        <taxon>Eutheria</taxon>
        <taxon>Euarchontoglires</taxon>
        <taxon>Glires</taxon>
        <taxon>Rodentia</taxon>
        <taxon>Myomorpha</taxon>
        <taxon>Muroidea</taxon>
        <taxon>Muridae</taxon>
        <taxon>Murinae</taxon>
        <taxon>Mus</taxon>
        <taxon>Mus</taxon>
    </lineage>
</organism>
<keyword id="KW-0002">3D-structure</keyword>
<keyword id="KW-0210">Decarboxylase</keyword>
<keyword id="KW-0456">Lyase</keyword>
<keyword id="KW-0597">Phosphoprotein</keyword>
<keyword id="KW-0620">Polyamine biosynthesis</keyword>
<keyword id="KW-0663">Pyridoxal phosphate</keyword>
<keyword id="KW-1185">Reference proteome</keyword>
<keyword id="KW-0702">S-nitrosylation</keyword>
<comment type="function">
    <text evidence="5 7">Catalyzes the first and rate-limiting step of polyamine biosynthesis that converts ornithine into putrescine, which is the precursor for the polyamines, spermidine and spermine. Polyamines are essential for cell proliferation and are implicated in cellular processes, ranging from DNA replication to apoptosis.</text>
</comment>
<comment type="catalytic activity">
    <reaction evidence="2">
        <text>L-ornithine + H(+) = putrescine + CO2</text>
        <dbReference type="Rhea" id="RHEA:22964"/>
        <dbReference type="ChEBI" id="CHEBI:15378"/>
        <dbReference type="ChEBI" id="CHEBI:16526"/>
        <dbReference type="ChEBI" id="CHEBI:46911"/>
        <dbReference type="ChEBI" id="CHEBI:326268"/>
        <dbReference type="EC" id="4.1.1.17"/>
    </reaction>
</comment>
<comment type="cofactor">
    <cofactor evidence="3 4">
        <name>pyridoxal 5'-phosphate</name>
        <dbReference type="ChEBI" id="CHEBI:597326"/>
    </cofactor>
</comment>
<comment type="activity regulation">
    <text evidence="2">Inhibited by antizymes (AZs) OAZ1, OAZ2 and OAZ3 in response to polyamine levels. AZs inhibit the assembly of the functional homodimer by binding to ODC monomers. Additionally, OAZ1 targets ODC monomers for ubiquitin-independent proteolytic destruction by the 26S proteasome.</text>
</comment>
<comment type="pathway">
    <text>Amine and polyamine biosynthesis; putrescine biosynthesis via L-ornithine pathway; putrescine from L-ornithine: step 1/1.</text>
</comment>
<comment type="subunit">
    <text evidence="3 7 8">Homodimer. Only the dimer is catalytically active, as the active sites are constructed of residues from both monomers (PubMed:10378276, PubMed:8106349). Does not form a heterodimer with AZIN2 (PubMed:24967154).</text>
</comment>
<comment type="tissue specificity">
    <text evidence="5">Expressed during testis development in the outer part of the seminiferous tubules.</text>
</comment>
<comment type="similarity">
    <text evidence="11">Belongs to the Orn/Lys/Arg decarboxylase class-II family.</text>
</comment>
<dbReference type="EC" id="4.1.1.17"/>
<dbReference type="EMBL" id="M20617">
    <property type="protein sequence ID" value="AAA51638.1"/>
    <property type="molecule type" value="mRNA"/>
</dbReference>
<dbReference type="EMBL" id="M10624">
    <property type="protein sequence ID" value="AAA39845.1"/>
    <property type="molecule type" value="mRNA"/>
</dbReference>
<dbReference type="EMBL" id="X07392">
    <property type="protein sequence ID" value="CAA30301.1"/>
    <property type="molecule type" value="Genomic_DNA"/>
</dbReference>
<dbReference type="EMBL" id="J03733">
    <property type="protein sequence ID" value="AAA39849.1"/>
    <property type="molecule type" value="Genomic_DNA"/>
</dbReference>
<dbReference type="EMBL" id="S64539">
    <property type="protein sequence ID" value="AAB27809.1"/>
    <property type="molecule type" value="mRNA"/>
</dbReference>
<dbReference type="EMBL" id="EU684749">
    <property type="protein sequence ID" value="ACD81645.1"/>
    <property type="molecule type" value="mRNA"/>
</dbReference>
<dbReference type="EMBL" id="AK139610">
    <property type="protein sequence ID" value="BAE24082.1"/>
    <property type="molecule type" value="mRNA"/>
</dbReference>
<dbReference type="EMBL" id="CH466582">
    <property type="protein sequence ID" value="EDK98494.1"/>
    <property type="molecule type" value="Genomic_DNA"/>
</dbReference>
<dbReference type="EMBL" id="BC059826">
    <property type="protein sequence ID" value="AAH59826.1"/>
    <property type="molecule type" value="mRNA"/>
</dbReference>
<dbReference type="EMBL" id="BC083122">
    <property type="protein sequence ID" value="AAH83122.1"/>
    <property type="molecule type" value="mRNA"/>
</dbReference>
<dbReference type="EMBL" id="M12330">
    <property type="protein sequence ID" value="AAA39846.1"/>
    <property type="molecule type" value="mRNA"/>
</dbReference>
<dbReference type="EMBL" id="M12331">
    <property type="protein sequence ID" value="AAA39848.1"/>
    <property type="molecule type" value="mRNA"/>
</dbReference>
<dbReference type="CCDS" id="CCDS25829.1"/>
<dbReference type="PIR" id="A01077">
    <property type="entry name" value="DCMSO"/>
</dbReference>
<dbReference type="PIR" id="I56477">
    <property type="entry name" value="I56477"/>
</dbReference>
<dbReference type="RefSeq" id="NP_001396552.1">
    <property type="nucleotide sequence ID" value="NM_001409623.1"/>
</dbReference>
<dbReference type="RefSeq" id="NP_001396553.1">
    <property type="nucleotide sequence ID" value="NM_001409624.1"/>
</dbReference>
<dbReference type="RefSeq" id="NP_001396556.1">
    <property type="nucleotide sequence ID" value="NM_001409627.1"/>
</dbReference>
<dbReference type="RefSeq" id="NP_001396557.1">
    <property type="nucleotide sequence ID" value="NM_001409628.1"/>
</dbReference>
<dbReference type="RefSeq" id="NP_001396558.1">
    <property type="nucleotide sequence ID" value="NM_001409629.1"/>
</dbReference>
<dbReference type="RefSeq" id="NP_001396560.1">
    <property type="nucleotide sequence ID" value="NM_001409631.1"/>
</dbReference>
<dbReference type="RefSeq" id="NP_001396561.1">
    <property type="nucleotide sequence ID" value="NM_001409632.1"/>
</dbReference>
<dbReference type="RefSeq" id="NP_001396562.1">
    <property type="nucleotide sequence ID" value="NM_001409633.1"/>
</dbReference>
<dbReference type="RefSeq" id="NP_001396563.1">
    <property type="nucleotide sequence ID" value="NM_001409634.1"/>
</dbReference>
<dbReference type="RefSeq" id="NP_001396564.1">
    <property type="nucleotide sequence ID" value="NM_001409635.1"/>
</dbReference>
<dbReference type="RefSeq" id="NP_001396565.1">
    <property type="nucleotide sequence ID" value="NM_001409636.1"/>
</dbReference>
<dbReference type="RefSeq" id="NP_038642.2">
    <property type="nucleotide sequence ID" value="NM_013614.3"/>
</dbReference>
<dbReference type="RefSeq" id="XP_017170479.1">
    <property type="nucleotide sequence ID" value="XM_017314990.1"/>
</dbReference>
<dbReference type="PDB" id="7ODC">
    <property type="method" value="X-ray"/>
    <property type="resolution" value="1.60 A"/>
    <property type="chains" value="A=1-424"/>
</dbReference>
<dbReference type="PDBsum" id="7ODC"/>
<dbReference type="SMR" id="P00860"/>
<dbReference type="BioGRID" id="201896">
    <property type="interactions" value="1"/>
</dbReference>
<dbReference type="FunCoup" id="P00860">
    <property type="interactions" value="839"/>
</dbReference>
<dbReference type="IntAct" id="P00860">
    <property type="interactions" value="1"/>
</dbReference>
<dbReference type="STRING" id="10090.ENSMUSP00000128661"/>
<dbReference type="ChEMBL" id="CHEMBL2840"/>
<dbReference type="GlyGen" id="P00860">
    <property type="glycosylation" value="2 sites"/>
</dbReference>
<dbReference type="iPTMnet" id="P00860"/>
<dbReference type="PhosphoSitePlus" id="P00860"/>
<dbReference type="PaxDb" id="10090-ENSMUSP00000128661"/>
<dbReference type="ProteomicsDB" id="279314"/>
<dbReference type="Pumba" id="P00860"/>
<dbReference type="Antibodypedia" id="781">
    <property type="antibodies" value="932 antibodies from 35 providers"/>
</dbReference>
<dbReference type="DNASU" id="18263"/>
<dbReference type="Ensembl" id="ENSMUST00000171737.3">
    <property type="protein sequence ID" value="ENSMUSP00000128661.2"/>
    <property type="gene ID" value="ENSMUSG00000011179.9"/>
</dbReference>
<dbReference type="GeneID" id="18263"/>
<dbReference type="KEGG" id="mmu:18263"/>
<dbReference type="UCSC" id="uc007ncv.1">
    <property type="organism name" value="mouse"/>
</dbReference>
<dbReference type="AGR" id="MGI:97402"/>
<dbReference type="CTD" id="4953"/>
<dbReference type="MGI" id="MGI:97402">
    <property type="gene designation" value="Odc1"/>
</dbReference>
<dbReference type="VEuPathDB" id="HostDB:ENSMUSG00000011179"/>
<dbReference type="eggNOG" id="KOG0622">
    <property type="taxonomic scope" value="Eukaryota"/>
</dbReference>
<dbReference type="GeneTree" id="ENSGT00950000182995"/>
<dbReference type="HOGENOM" id="CLU_026444_1_1_1"/>
<dbReference type="InParanoid" id="P00860"/>
<dbReference type="OMA" id="AYCRSMA"/>
<dbReference type="OrthoDB" id="5034579at2759"/>
<dbReference type="PhylomeDB" id="P00860"/>
<dbReference type="TreeFam" id="TF300760"/>
<dbReference type="BRENDA" id="4.1.1.17">
    <property type="organism ID" value="3474"/>
</dbReference>
<dbReference type="Reactome" id="R-MMU-350562">
    <property type="pathway name" value="Regulation of ornithine decarboxylase (ODC)"/>
</dbReference>
<dbReference type="Reactome" id="R-MMU-351202">
    <property type="pathway name" value="Metabolism of polyamines"/>
</dbReference>
<dbReference type="SABIO-RK" id="P00860"/>
<dbReference type="UniPathway" id="UPA00535">
    <property type="reaction ID" value="UER00288"/>
</dbReference>
<dbReference type="BioGRID-ORCS" id="18263">
    <property type="hits" value="4 hits in 80 CRISPR screens"/>
</dbReference>
<dbReference type="ChiTaRS" id="Odc1">
    <property type="organism name" value="mouse"/>
</dbReference>
<dbReference type="EvolutionaryTrace" id="P00860"/>
<dbReference type="PRO" id="PR:P00860"/>
<dbReference type="Proteomes" id="UP000000589">
    <property type="component" value="Chromosome 12"/>
</dbReference>
<dbReference type="RNAct" id="P00860">
    <property type="molecule type" value="protein"/>
</dbReference>
<dbReference type="Bgee" id="ENSMUSG00000011179">
    <property type="expression patterns" value="Expressed in spermatid and 271 other cell types or tissues"/>
</dbReference>
<dbReference type="ExpressionAtlas" id="P00860">
    <property type="expression patterns" value="baseline and differential"/>
</dbReference>
<dbReference type="GO" id="GO:0005737">
    <property type="term" value="C:cytoplasm"/>
    <property type="evidence" value="ECO:0000314"/>
    <property type="project" value="UniProtKB"/>
</dbReference>
<dbReference type="GO" id="GO:0005829">
    <property type="term" value="C:cytosol"/>
    <property type="evidence" value="ECO:0000314"/>
    <property type="project" value="MGI"/>
</dbReference>
<dbReference type="GO" id="GO:0048471">
    <property type="term" value="C:perinuclear region of cytoplasm"/>
    <property type="evidence" value="ECO:0007669"/>
    <property type="project" value="Ensembl"/>
</dbReference>
<dbReference type="GO" id="GO:0004586">
    <property type="term" value="F:ornithine decarboxylase activity"/>
    <property type="evidence" value="ECO:0000314"/>
    <property type="project" value="UniProtKB"/>
</dbReference>
<dbReference type="GO" id="GO:0042803">
    <property type="term" value="F:protein homodimerization activity"/>
    <property type="evidence" value="ECO:0000314"/>
    <property type="project" value="UniProtKB"/>
</dbReference>
<dbReference type="GO" id="GO:0008283">
    <property type="term" value="P:cell population proliferation"/>
    <property type="evidence" value="ECO:0000315"/>
    <property type="project" value="MGI"/>
</dbReference>
<dbReference type="GO" id="GO:0001822">
    <property type="term" value="P:kidney development"/>
    <property type="evidence" value="ECO:0000315"/>
    <property type="project" value="MGI"/>
</dbReference>
<dbReference type="GO" id="GO:0008284">
    <property type="term" value="P:positive regulation of cell population proliferation"/>
    <property type="evidence" value="ECO:0000315"/>
    <property type="project" value="MGI"/>
</dbReference>
<dbReference type="GO" id="GO:0033387">
    <property type="term" value="P:putrescine biosynthetic process from arginine, via ornithine"/>
    <property type="evidence" value="ECO:0000314"/>
    <property type="project" value="UniProtKB"/>
</dbReference>
<dbReference type="GO" id="GO:0042176">
    <property type="term" value="P:regulation of protein catabolic process"/>
    <property type="evidence" value="ECO:0000314"/>
    <property type="project" value="UniProtKB"/>
</dbReference>
<dbReference type="GO" id="GO:0009615">
    <property type="term" value="P:response to virus"/>
    <property type="evidence" value="ECO:0007669"/>
    <property type="project" value="Ensembl"/>
</dbReference>
<dbReference type="CDD" id="cd00622">
    <property type="entry name" value="PLPDE_III_ODC"/>
    <property type="match status" value="1"/>
</dbReference>
<dbReference type="FunFam" id="2.40.37.10:FF:000005">
    <property type="entry name" value="Ornithine decarboxylase"/>
    <property type="match status" value="1"/>
</dbReference>
<dbReference type="FunFam" id="3.20.20.10:FF:000006">
    <property type="entry name" value="Ornithine decarboxylase 1"/>
    <property type="match status" value="1"/>
</dbReference>
<dbReference type="Gene3D" id="3.20.20.10">
    <property type="entry name" value="Alanine racemase"/>
    <property type="match status" value="1"/>
</dbReference>
<dbReference type="Gene3D" id="2.40.37.10">
    <property type="entry name" value="Lyase, Ornithine Decarboxylase, Chain A, domain 1"/>
    <property type="match status" value="1"/>
</dbReference>
<dbReference type="InterPro" id="IPR009006">
    <property type="entry name" value="Ala_racemase/Decarboxylase_C"/>
</dbReference>
<dbReference type="InterPro" id="IPR022643">
    <property type="entry name" value="De-COase2_C"/>
</dbReference>
<dbReference type="InterPro" id="IPR022657">
    <property type="entry name" value="De-COase2_CS"/>
</dbReference>
<dbReference type="InterPro" id="IPR022644">
    <property type="entry name" value="De-COase2_N"/>
</dbReference>
<dbReference type="InterPro" id="IPR022653">
    <property type="entry name" value="De-COase2_pyr-phos_BS"/>
</dbReference>
<dbReference type="InterPro" id="IPR000183">
    <property type="entry name" value="Orn/DAP/Arg_de-COase"/>
</dbReference>
<dbReference type="InterPro" id="IPR002433">
    <property type="entry name" value="Orn_de-COase"/>
</dbReference>
<dbReference type="InterPro" id="IPR029066">
    <property type="entry name" value="PLP-binding_barrel"/>
</dbReference>
<dbReference type="PANTHER" id="PTHR11482">
    <property type="entry name" value="ARGININE/DIAMINOPIMELATE/ORNITHINE DECARBOXYLASE"/>
    <property type="match status" value="1"/>
</dbReference>
<dbReference type="PANTHER" id="PTHR11482:SF42">
    <property type="entry name" value="ORNITHINE DECARBOXYLASE"/>
    <property type="match status" value="1"/>
</dbReference>
<dbReference type="Pfam" id="PF02784">
    <property type="entry name" value="Orn_Arg_deC_N"/>
    <property type="match status" value="1"/>
</dbReference>
<dbReference type="Pfam" id="PF00278">
    <property type="entry name" value="Orn_DAP_Arg_deC"/>
    <property type="match status" value="1"/>
</dbReference>
<dbReference type="PRINTS" id="PR01179">
    <property type="entry name" value="ODADCRBXLASE"/>
</dbReference>
<dbReference type="PRINTS" id="PR01182">
    <property type="entry name" value="ORNDCRBXLASE"/>
</dbReference>
<dbReference type="SUPFAM" id="SSF50621">
    <property type="entry name" value="Alanine racemase C-terminal domain-like"/>
    <property type="match status" value="1"/>
</dbReference>
<dbReference type="SUPFAM" id="SSF51419">
    <property type="entry name" value="PLP-binding barrel"/>
    <property type="match status" value="1"/>
</dbReference>
<dbReference type="PROSITE" id="PS00878">
    <property type="entry name" value="ODR_DC_2_1"/>
    <property type="match status" value="1"/>
</dbReference>
<dbReference type="PROSITE" id="PS00879">
    <property type="entry name" value="ODR_DC_2_2"/>
    <property type="match status" value="1"/>
</dbReference>
<accession>P00860</accession>
<accession>Q61997</accession>
<accession>Q61998</accession>
<accession>Q6PB87</accession>
<evidence type="ECO:0000250" key="1">
    <source>
        <dbReference type="UniProtKB" id="P07805"/>
    </source>
</evidence>
<evidence type="ECO:0000250" key="2">
    <source>
        <dbReference type="UniProtKB" id="P11926"/>
    </source>
</evidence>
<evidence type="ECO:0000269" key="3">
    <source>
    </source>
</evidence>
<evidence type="ECO:0000269" key="4">
    <source>
    </source>
</evidence>
<evidence type="ECO:0000269" key="5">
    <source>
    </source>
</evidence>
<evidence type="ECO:0000269" key="6">
    <source>
    </source>
</evidence>
<evidence type="ECO:0000269" key="7">
    <source>
    </source>
</evidence>
<evidence type="ECO:0000269" key="8">
    <source>
    </source>
</evidence>
<evidence type="ECO:0000269" key="9">
    <source>
    </source>
</evidence>
<evidence type="ECO:0000269" key="10">
    <source>
    </source>
</evidence>
<evidence type="ECO:0000305" key="11"/>
<evidence type="ECO:0000305" key="12">
    <source>
    </source>
</evidence>
<evidence type="ECO:0007744" key="13">
    <source>
        <dbReference type="PDB" id="7ODC"/>
    </source>
</evidence>
<evidence type="ECO:0007829" key="14">
    <source>
        <dbReference type="PDB" id="7ODC"/>
    </source>
</evidence>
<protein>
    <recommendedName>
        <fullName>Ornithine decarboxylase</fullName>
        <shortName>ODC</shortName>
        <ecNumber>4.1.1.17</ecNumber>
    </recommendedName>
</protein>
<gene>
    <name type="primary">Odc1</name>
    <name type="synonym">Odc</name>
</gene>
<name>DCOR_MOUSE</name>